<organism>
    <name type="scientific">Escherichia fergusonii (strain ATCC 35469 / DSM 13698 / CCUG 18766 / IAM 14443 / JCM 21226 / LMG 7866 / NBRC 102419 / NCTC 12128 / CDC 0568-73)</name>
    <dbReference type="NCBI Taxonomy" id="585054"/>
    <lineage>
        <taxon>Bacteria</taxon>
        <taxon>Pseudomonadati</taxon>
        <taxon>Pseudomonadota</taxon>
        <taxon>Gammaproteobacteria</taxon>
        <taxon>Enterobacterales</taxon>
        <taxon>Enterobacteriaceae</taxon>
        <taxon>Escherichia</taxon>
    </lineage>
</organism>
<dbReference type="EC" id="3.1.3.1"/>
<dbReference type="EMBL" id="M33966">
    <property type="protein sequence ID" value="AAA24371.1"/>
    <property type="molecule type" value="Genomic_DNA"/>
</dbReference>
<dbReference type="EMBL" id="CU928158">
    <property type="protein sequence ID" value="CAQ90135.1"/>
    <property type="molecule type" value="Genomic_DNA"/>
</dbReference>
<dbReference type="PIR" id="I57445">
    <property type="entry name" value="I57445"/>
</dbReference>
<dbReference type="RefSeq" id="WP_000813782.1">
    <property type="nucleotide sequence ID" value="NC_011740.1"/>
</dbReference>
<dbReference type="SMR" id="P21948"/>
<dbReference type="GeneID" id="75056330"/>
<dbReference type="KEGG" id="efe:EFER_2640"/>
<dbReference type="HOGENOM" id="CLU_008539_0_1_6"/>
<dbReference type="OrthoDB" id="9794455at2"/>
<dbReference type="Proteomes" id="UP000000745">
    <property type="component" value="Chromosome"/>
</dbReference>
<dbReference type="GO" id="GO:0042597">
    <property type="term" value="C:periplasmic space"/>
    <property type="evidence" value="ECO:0007669"/>
    <property type="project" value="UniProtKB-SubCell"/>
</dbReference>
<dbReference type="GO" id="GO:0004035">
    <property type="term" value="F:alkaline phosphatase activity"/>
    <property type="evidence" value="ECO:0007669"/>
    <property type="project" value="UniProtKB-EC"/>
</dbReference>
<dbReference type="GO" id="GO:0046872">
    <property type="term" value="F:metal ion binding"/>
    <property type="evidence" value="ECO:0007669"/>
    <property type="project" value="UniProtKB-KW"/>
</dbReference>
<dbReference type="CDD" id="cd16012">
    <property type="entry name" value="ALP"/>
    <property type="match status" value="1"/>
</dbReference>
<dbReference type="FunFam" id="3.40.720.10:FF:000040">
    <property type="entry name" value="Alkaline phosphatase"/>
    <property type="match status" value="1"/>
</dbReference>
<dbReference type="Gene3D" id="3.40.720.10">
    <property type="entry name" value="Alkaline Phosphatase, subunit A"/>
    <property type="match status" value="1"/>
</dbReference>
<dbReference type="InterPro" id="IPR001952">
    <property type="entry name" value="Alkaline_phosphatase"/>
</dbReference>
<dbReference type="InterPro" id="IPR018299">
    <property type="entry name" value="Alkaline_phosphatase_AS"/>
</dbReference>
<dbReference type="InterPro" id="IPR017850">
    <property type="entry name" value="Alkaline_phosphatase_core_sf"/>
</dbReference>
<dbReference type="NCBIfam" id="NF007810">
    <property type="entry name" value="PRK10518.1"/>
    <property type="match status" value="1"/>
</dbReference>
<dbReference type="PANTHER" id="PTHR11596">
    <property type="entry name" value="ALKALINE PHOSPHATASE"/>
    <property type="match status" value="1"/>
</dbReference>
<dbReference type="PANTHER" id="PTHR11596:SF5">
    <property type="entry name" value="ALKALINE PHOSPHATASE"/>
    <property type="match status" value="1"/>
</dbReference>
<dbReference type="Pfam" id="PF00245">
    <property type="entry name" value="Alk_phosphatase"/>
    <property type="match status" value="1"/>
</dbReference>
<dbReference type="PRINTS" id="PR00113">
    <property type="entry name" value="ALKPHPHTASE"/>
</dbReference>
<dbReference type="SMART" id="SM00098">
    <property type="entry name" value="alkPPc"/>
    <property type="match status" value="1"/>
</dbReference>
<dbReference type="SUPFAM" id="SSF53649">
    <property type="entry name" value="Alkaline phosphatase-like"/>
    <property type="match status" value="1"/>
</dbReference>
<dbReference type="PROSITE" id="PS00123">
    <property type="entry name" value="ALKALINE_PHOSPHATASE"/>
    <property type="match status" value="1"/>
</dbReference>
<protein>
    <recommendedName>
        <fullName>Alkaline phosphatase</fullName>
        <shortName>APase</shortName>
        <ecNumber>3.1.3.1</ecNumber>
    </recommendedName>
</protein>
<feature type="signal peptide">
    <location>
        <begin position="1"/>
        <end position="21"/>
    </location>
</feature>
<feature type="chain" id="PRO_0000024013" description="Alkaline phosphatase">
    <location>
        <begin position="22"/>
        <end position="472"/>
    </location>
</feature>
<feature type="active site" description="Phosphoserine intermediate" evidence="2">
    <location>
        <position position="125"/>
    </location>
</feature>
<feature type="binding site" evidence="1">
    <location>
        <position position="74"/>
    </location>
    <ligand>
        <name>Mg(2+)</name>
        <dbReference type="ChEBI" id="CHEBI:18420"/>
    </ligand>
</feature>
<feature type="binding site" evidence="1">
    <location>
        <position position="74"/>
    </location>
    <ligand>
        <name>Zn(2+)</name>
        <dbReference type="ChEBI" id="CHEBI:29105"/>
        <label>2</label>
    </ligand>
</feature>
<feature type="binding site" evidence="1">
    <location>
        <position position="176"/>
    </location>
    <ligand>
        <name>Mg(2+)</name>
        <dbReference type="ChEBI" id="CHEBI:18420"/>
    </ligand>
</feature>
<feature type="binding site" evidence="1">
    <location>
        <position position="178"/>
    </location>
    <ligand>
        <name>Mg(2+)</name>
        <dbReference type="ChEBI" id="CHEBI:18420"/>
    </ligand>
</feature>
<feature type="binding site" evidence="1">
    <location>
        <position position="345"/>
    </location>
    <ligand>
        <name>Mg(2+)</name>
        <dbReference type="ChEBI" id="CHEBI:18420"/>
    </ligand>
</feature>
<feature type="binding site" evidence="1">
    <location>
        <position position="350"/>
    </location>
    <ligand>
        <name>Zn(2+)</name>
        <dbReference type="ChEBI" id="CHEBI:29105"/>
        <label>1</label>
    </ligand>
</feature>
<feature type="binding site" evidence="1">
    <location>
        <position position="354"/>
    </location>
    <ligand>
        <name>Zn(2+)</name>
        <dbReference type="ChEBI" id="CHEBI:29105"/>
        <label>1</label>
    </ligand>
</feature>
<feature type="binding site" evidence="1">
    <location>
        <position position="392"/>
    </location>
    <ligand>
        <name>Zn(2+)</name>
        <dbReference type="ChEBI" id="CHEBI:29105"/>
        <label>2</label>
    </ligand>
</feature>
<feature type="binding site" evidence="1">
    <location>
        <position position="393"/>
    </location>
    <ligand>
        <name>Zn(2+)</name>
        <dbReference type="ChEBI" id="CHEBI:29105"/>
        <label>2</label>
    </ligand>
</feature>
<feature type="binding site" evidence="1">
    <location>
        <position position="435"/>
    </location>
    <ligand>
        <name>Zn(2+)</name>
        <dbReference type="ChEBI" id="CHEBI:29105"/>
        <label>1</label>
    </ligand>
</feature>
<feature type="disulfide bond" evidence="1">
    <location>
        <begin position="191"/>
        <end position="201"/>
    </location>
</feature>
<feature type="disulfide bond" evidence="1">
    <location>
        <begin position="309"/>
        <end position="359"/>
    </location>
</feature>
<proteinExistence type="inferred from homology"/>
<evidence type="ECO:0000250" key="1"/>
<evidence type="ECO:0000255" key="2">
    <source>
        <dbReference type="PROSITE-ProRule" id="PRU10042"/>
    </source>
</evidence>
<evidence type="ECO:0000305" key="3"/>
<name>PPB_ESCF3</name>
<keyword id="KW-1015">Disulfide bond</keyword>
<keyword id="KW-0378">Hydrolase</keyword>
<keyword id="KW-0460">Magnesium</keyword>
<keyword id="KW-0479">Metal-binding</keyword>
<keyword id="KW-0574">Periplasm</keyword>
<keyword id="KW-0597">Phosphoprotein</keyword>
<keyword id="KW-0732">Signal</keyword>
<keyword id="KW-0862">Zinc</keyword>
<comment type="catalytic activity">
    <reaction evidence="2">
        <text>a phosphate monoester + H2O = an alcohol + phosphate</text>
        <dbReference type="Rhea" id="RHEA:15017"/>
        <dbReference type="ChEBI" id="CHEBI:15377"/>
        <dbReference type="ChEBI" id="CHEBI:30879"/>
        <dbReference type="ChEBI" id="CHEBI:43474"/>
        <dbReference type="ChEBI" id="CHEBI:67140"/>
        <dbReference type="EC" id="3.1.3.1"/>
    </reaction>
</comment>
<comment type="cofactor">
    <cofactor>
        <name>Mg(2+)</name>
        <dbReference type="ChEBI" id="CHEBI:18420"/>
    </cofactor>
    <text>Binds 1 Mg(2+) ion.</text>
</comment>
<comment type="cofactor">
    <cofactor>
        <name>Zn(2+)</name>
        <dbReference type="ChEBI" id="CHEBI:29105"/>
    </cofactor>
    <text>Binds 2 Zn(2+) ions.</text>
</comment>
<comment type="subunit">
    <text>Homodimer.</text>
</comment>
<comment type="subcellular location">
    <subcellularLocation>
        <location>Periplasm</location>
    </subcellularLocation>
</comment>
<comment type="similarity">
    <text evidence="3">Belongs to the alkaline phosphatase family.</text>
</comment>
<accession>P21948</accession>
<accession>B7LMK2</accession>
<reference key="1">
    <citation type="journal article" date="1990" name="Mol. Biol. Evol.">
        <title>The molecular evolution of bacterial alkaline phosphatase: correlating variation among enteric bacteria to experimental manipulations of the protein.</title>
        <authorList>
            <person name="Dubose R.F."/>
            <person name="Hartl D.L."/>
        </authorList>
    </citation>
    <scope>NUCLEOTIDE SEQUENCE [GENOMIC DNA]</scope>
</reference>
<reference key="2">
    <citation type="journal article" date="2009" name="PLoS Genet.">
        <title>Organised genome dynamics in the Escherichia coli species results in highly diverse adaptive paths.</title>
        <authorList>
            <person name="Touchon M."/>
            <person name="Hoede C."/>
            <person name="Tenaillon O."/>
            <person name="Barbe V."/>
            <person name="Baeriswyl S."/>
            <person name="Bidet P."/>
            <person name="Bingen E."/>
            <person name="Bonacorsi S."/>
            <person name="Bouchier C."/>
            <person name="Bouvet O."/>
            <person name="Calteau A."/>
            <person name="Chiapello H."/>
            <person name="Clermont O."/>
            <person name="Cruveiller S."/>
            <person name="Danchin A."/>
            <person name="Diard M."/>
            <person name="Dossat C."/>
            <person name="Karoui M.E."/>
            <person name="Frapy E."/>
            <person name="Garry L."/>
            <person name="Ghigo J.M."/>
            <person name="Gilles A.M."/>
            <person name="Johnson J."/>
            <person name="Le Bouguenec C."/>
            <person name="Lescat M."/>
            <person name="Mangenot S."/>
            <person name="Martinez-Jehanne V."/>
            <person name="Matic I."/>
            <person name="Nassif X."/>
            <person name="Oztas S."/>
            <person name="Petit M.A."/>
            <person name="Pichon C."/>
            <person name="Rouy Z."/>
            <person name="Ruf C.S."/>
            <person name="Schneider D."/>
            <person name="Tourret J."/>
            <person name="Vacherie B."/>
            <person name="Vallenet D."/>
            <person name="Medigue C."/>
            <person name="Rocha E.P.C."/>
            <person name="Denamur E."/>
        </authorList>
    </citation>
    <scope>NUCLEOTIDE SEQUENCE [LARGE SCALE GENOMIC DNA]</scope>
    <source>
        <strain>ATCC 35469 / DSM 13698 / BCRC 15582 / CCUG 18766 / IAM 14443 / JCM 21226 / LMG 7866 / NBRC 102419 / NCTC 12128 / CDC 0568-73</strain>
    </source>
</reference>
<sequence length="472" mass="49430">MKQSAIALALLSCLITPVSQAQTSQNINILENRAAQGDITMPGGARRLSGDQTEALRASLNDKPAKNIILLIGDGMGDSEITAARNYAEGAGGYFKGIDALPLTGQYTHYALDKKTGKPDYVTDSAASATAWTTGVKTYNGALGVDIHENPHTTILEMAKAAGLATGNVSTAELQDATPAALVSHVTSRKCYGPSVTSEKCPGNALEKGGKGSITEQLLNARADVTLGGGAKTFAETATAGEWQGKTLREQALARGYQIVSDAASLAAVTQAGQDKPLLGLFAEGNMPVRWHGPKASYHGNLDKPAVTCTPNPQRNETVPTLAQMTDKAIELLSKNERGFFLQVEGASIDKQDHAANPCGQIGETVDLDEAVQRALEFAKKDGNTLVIVTADHAHSSQIVAPDTKAPGLTQALNTKDGAVMAISYGNSEEDSQEHTGSQLRIAAYGPNAANVVGLTDQTDLFYTMKAALGLQ</sequence>
<gene>
    <name type="primary">phoA</name>
    <name type="ordered locus">EFER_2640</name>
</gene>